<sequence>MARKLSVILILTFALSVTNPLHELKAAAFPQTTEKISPNWESGINVDLAISTRQYHLQQLFYRYGENNSLSVEGFRKLLQNIGIDKIKRIHIHHDHDHHSDHEHHSDHERHSDHEHHSEHEHHSDHDHHSHHNHAASGKNKRKALCPDHDSDSSGKDPRNSQGKGAHRPEHASGRRNVKDSVSASEVTSTVYNTVSEGTHFLETIETPRPGKLFPKDVSSSTPPSVTSKSRVSRLAGRKTNESVSEPRKGFMYSRNTNENPQECFNASKLLTSHGMGIQVPLNATEFNYLCPAIINQIDARSCLIHTSEKKAEIPPKTYSLQIAWVGGFIAISIISFLSLLGVILVPLMNRVFFKFLLSFLVALAVGTLSGDAFLHLLPHSHASHHHSHSHEEPAMEMKRGPLFSHLSSQNIEESAYFDSTWKGLTALGGLYFMFLVEHVLTLIKQFKDKKKKNQKKPENDDDVEIKKQLSKYESQLSTNEEKVDTDDRTEGYLRADSQEPSHFDSQQPAVLEEEEVMIAHAHPQEVYNEYVPRGCKNKCHSHFHDTLGQSDDLIHHHHDYHHILHHHHHQNHHPHSHSQRYSREELKDAGVATLAWMVIMGDGLHNFSDGLAIGAAFTEGLSSGLSTSVAVFCHELPHELGDFAVLLKAGMTVKQAVLYNALSAMLAYLGMATGIFIGHYAENVSMWIFALTAGLFMYVALVDMVPEMLHNDASDHGCSRWGYFFLQNAGMLLGFGIMLLISIFEHKIVFRINF</sequence>
<proteinExistence type="evidence at protein level"/>
<accession>Q13433</accession>
<accession>B4DR49</accession>
<accession>B4E224</accession>
<accession>Q8IXR3</accession>
<accession>Q96HP5</accession>
<organism>
    <name type="scientific">Homo sapiens</name>
    <name type="common">Human</name>
    <dbReference type="NCBI Taxonomy" id="9606"/>
    <lineage>
        <taxon>Eukaryota</taxon>
        <taxon>Metazoa</taxon>
        <taxon>Chordata</taxon>
        <taxon>Craniata</taxon>
        <taxon>Vertebrata</taxon>
        <taxon>Euteleostomi</taxon>
        <taxon>Mammalia</taxon>
        <taxon>Eutheria</taxon>
        <taxon>Euarchontoglires</taxon>
        <taxon>Primates</taxon>
        <taxon>Haplorrhini</taxon>
        <taxon>Catarrhini</taxon>
        <taxon>Hominidae</taxon>
        <taxon>Homo</taxon>
    </lineage>
</organism>
<protein>
    <recommendedName>
        <fullName evidence="21">Zinc transporter ZIP6</fullName>
    </recommendedName>
    <alternativeName>
        <fullName>Estrogen-regulated protein LIV-1</fullName>
    </alternativeName>
    <alternativeName>
        <fullName>Solute carrier family 39 member 6</fullName>
    </alternativeName>
    <alternativeName>
        <fullName>Zrt- and Irt-like protein 6</fullName>
        <shortName>ZIP-6</shortName>
    </alternativeName>
</protein>
<keyword id="KW-0025">Alternative splicing</keyword>
<keyword id="KW-1003">Cell membrane</keyword>
<keyword id="KW-0966">Cell projection</keyword>
<keyword id="KW-0175">Coiled coil</keyword>
<keyword id="KW-0903">Direct protein sequencing</keyword>
<keyword id="KW-0325">Glycoprotein</keyword>
<keyword id="KW-0406">Ion transport</keyword>
<keyword id="KW-0472">Membrane</keyword>
<keyword id="KW-0597">Phosphoprotein</keyword>
<keyword id="KW-1267">Proteomics identification</keyword>
<keyword id="KW-1185">Reference proteome</keyword>
<keyword id="KW-0732">Signal</keyword>
<keyword id="KW-0812">Transmembrane</keyword>
<keyword id="KW-1133">Transmembrane helix</keyword>
<keyword id="KW-0813">Transport</keyword>
<keyword id="KW-0862">Zinc</keyword>
<keyword id="KW-0864">Zinc transport</keyword>
<name>S39A6_HUMAN</name>
<dbReference type="EMBL" id="U41060">
    <property type="protein sequence ID" value="AAA96258.2"/>
    <property type="molecule type" value="mRNA"/>
</dbReference>
<dbReference type="EMBL" id="AK299102">
    <property type="protein sequence ID" value="BAG61161.1"/>
    <property type="status" value="ALT_INIT"/>
    <property type="molecule type" value="mRNA"/>
</dbReference>
<dbReference type="EMBL" id="AK304079">
    <property type="protein sequence ID" value="BAG64986.1"/>
    <property type="molecule type" value="mRNA"/>
</dbReference>
<dbReference type="EMBL" id="AC091060">
    <property type="status" value="NOT_ANNOTATED_CDS"/>
    <property type="molecule type" value="Genomic_DNA"/>
</dbReference>
<dbReference type="EMBL" id="CH471088">
    <property type="protein sequence ID" value="EAX01372.1"/>
    <property type="molecule type" value="Genomic_DNA"/>
</dbReference>
<dbReference type="EMBL" id="BC008317">
    <property type="protein sequence ID" value="AAH08317.2"/>
    <property type="molecule type" value="mRNA"/>
</dbReference>
<dbReference type="EMBL" id="BC039498">
    <property type="protein sequence ID" value="AAH39498.1"/>
    <property type="molecule type" value="mRNA"/>
</dbReference>
<dbReference type="CCDS" id="CCDS42428.1">
    <molecule id="Q13433-1"/>
</dbReference>
<dbReference type="CCDS" id="CCDS45854.1">
    <molecule id="Q13433-2"/>
</dbReference>
<dbReference type="PIR" id="G02273">
    <property type="entry name" value="G02273"/>
</dbReference>
<dbReference type="RefSeq" id="NP_001092876.1">
    <molecule id="Q13433-2"/>
    <property type="nucleotide sequence ID" value="NM_001099406.2"/>
</dbReference>
<dbReference type="RefSeq" id="NP_036451.3">
    <molecule id="Q13433-1"/>
    <property type="nucleotide sequence ID" value="NM_012319.3"/>
</dbReference>
<dbReference type="RefSeq" id="XP_011524202.1">
    <property type="nucleotide sequence ID" value="XM_011525900.1"/>
</dbReference>
<dbReference type="RefSeq" id="XP_011524203.1">
    <property type="nucleotide sequence ID" value="XM_011525901.1"/>
</dbReference>
<dbReference type="BioGRID" id="117332">
    <property type="interactions" value="166"/>
</dbReference>
<dbReference type="FunCoup" id="Q13433">
    <property type="interactions" value="1178"/>
</dbReference>
<dbReference type="IntAct" id="Q13433">
    <property type="interactions" value="52"/>
</dbReference>
<dbReference type="MINT" id="Q13433"/>
<dbReference type="STRING" id="9606.ENSP00000269187"/>
<dbReference type="ChEMBL" id="CHEMBL4523581"/>
<dbReference type="DrugBank" id="DB14533">
    <property type="generic name" value="Zinc chloride"/>
</dbReference>
<dbReference type="DrugBank" id="DB14548">
    <property type="generic name" value="Zinc sulfate, unspecified form"/>
</dbReference>
<dbReference type="MEROPS" id="X40.001"/>
<dbReference type="TCDB" id="2.A.5.4.13">
    <property type="family name" value="the zinc (zn(2+))-iron (fe(2+)) permease (zip) family"/>
</dbReference>
<dbReference type="GlyConnect" id="1908">
    <property type="glycosylation" value="8 N-Linked glycans (3 sites)"/>
</dbReference>
<dbReference type="GlyCosmos" id="Q13433">
    <property type="glycosylation" value="7 sites, 10 glycans"/>
</dbReference>
<dbReference type="GlyGen" id="Q13433">
    <property type="glycosylation" value="22 sites, 15 N-linked glycans (4 sites), 4 O-linked glycans (15 sites)"/>
</dbReference>
<dbReference type="iPTMnet" id="Q13433"/>
<dbReference type="PhosphoSitePlus" id="Q13433"/>
<dbReference type="SwissPalm" id="Q13433"/>
<dbReference type="BioMuta" id="SLC39A6"/>
<dbReference type="DMDM" id="292495066"/>
<dbReference type="jPOST" id="Q13433"/>
<dbReference type="MassIVE" id="Q13433"/>
<dbReference type="PaxDb" id="9606-ENSP00000269187"/>
<dbReference type="PeptideAtlas" id="Q13433"/>
<dbReference type="ProteomicsDB" id="59428">
    <molecule id="Q13433-1"/>
</dbReference>
<dbReference type="ProteomicsDB" id="59429">
    <molecule id="Q13433-2"/>
</dbReference>
<dbReference type="Pumba" id="Q13433"/>
<dbReference type="ABCD" id="Q13433">
    <property type="antibodies" value="1 sequenced antibody"/>
</dbReference>
<dbReference type="Antibodypedia" id="5245">
    <property type="antibodies" value="294 antibodies from 37 providers"/>
</dbReference>
<dbReference type="DNASU" id="25800"/>
<dbReference type="Ensembl" id="ENST00000269187.10">
    <molecule id="Q13433-1"/>
    <property type="protein sequence ID" value="ENSP00000269187.4"/>
    <property type="gene ID" value="ENSG00000141424.13"/>
</dbReference>
<dbReference type="Ensembl" id="ENST00000440549.6">
    <molecule id="Q13433-2"/>
    <property type="protein sequence ID" value="ENSP00000401139.1"/>
    <property type="gene ID" value="ENSG00000141424.13"/>
</dbReference>
<dbReference type="Ensembl" id="ENST00000590986.5">
    <molecule id="Q13433-1"/>
    <property type="protein sequence ID" value="ENSP00000465915.1"/>
    <property type="gene ID" value="ENSG00000141424.13"/>
</dbReference>
<dbReference type="GeneID" id="25800"/>
<dbReference type="KEGG" id="hsa:25800"/>
<dbReference type="MANE-Select" id="ENST00000269187.10">
    <property type="protein sequence ID" value="ENSP00000269187.4"/>
    <property type="RefSeq nucleotide sequence ID" value="NM_012319.4"/>
    <property type="RefSeq protein sequence ID" value="NP_036451.4"/>
</dbReference>
<dbReference type="UCSC" id="uc002kzj.3">
    <molecule id="Q13433-1"/>
    <property type="organism name" value="human"/>
</dbReference>
<dbReference type="AGR" id="HGNC:18607"/>
<dbReference type="CTD" id="25800"/>
<dbReference type="DisGeNET" id="25800"/>
<dbReference type="GeneCards" id="SLC39A6"/>
<dbReference type="HGNC" id="HGNC:18607">
    <property type="gene designation" value="SLC39A6"/>
</dbReference>
<dbReference type="HPA" id="ENSG00000141424">
    <property type="expression patterns" value="Low tissue specificity"/>
</dbReference>
<dbReference type="MIM" id="608731">
    <property type="type" value="gene"/>
</dbReference>
<dbReference type="neXtProt" id="NX_Q13433"/>
<dbReference type="OpenTargets" id="ENSG00000141424"/>
<dbReference type="PharmGKB" id="PA134905551"/>
<dbReference type="VEuPathDB" id="HostDB:ENSG00000141424"/>
<dbReference type="eggNOG" id="KOG2693">
    <property type="taxonomic scope" value="Eukaryota"/>
</dbReference>
<dbReference type="GeneTree" id="ENSGT00940000156387"/>
<dbReference type="HOGENOM" id="CLU_015114_13_2_1"/>
<dbReference type="InParanoid" id="Q13433"/>
<dbReference type="OMA" id="LLMSHGM"/>
<dbReference type="OrthoDB" id="200954at2759"/>
<dbReference type="PAN-GO" id="Q13433">
    <property type="GO annotations" value="4 GO annotations based on evolutionary models"/>
</dbReference>
<dbReference type="PhylomeDB" id="Q13433"/>
<dbReference type="TreeFam" id="TF318470"/>
<dbReference type="PathwayCommons" id="Q13433"/>
<dbReference type="Reactome" id="R-HSA-442380">
    <property type="pathway name" value="Zinc influx into cells by the SLC39 gene family"/>
</dbReference>
<dbReference type="SignaLink" id="Q13433"/>
<dbReference type="BioGRID-ORCS" id="25800">
    <property type="hits" value="15 hits in 1165 CRISPR screens"/>
</dbReference>
<dbReference type="ChiTaRS" id="SLC39A6">
    <property type="organism name" value="human"/>
</dbReference>
<dbReference type="GeneWiki" id="SLC39A6"/>
<dbReference type="GenomeRNAi" id="25800"/>
<dbReference type="Pharos" id="Q13433">
    <property type="development level" value="Tbio"/>
</dbReference>
<dbReference type="PRO" id="PR:Q13433"/>
<dbReference type="Proteomes" id="UP000005640">
    <property type="component" value="Chromosome 18"/>
</dbReference>
<dbReference type="RNAct" id="Q13433">
    <property type="molecule type" value="protein"/>
</dbReference>
<dbReference type="Bgee" id="ENSG00000141424">
    <property type="expression patterns" value="Expressed in secondary oocyte and 210 other cell types or tissues"/>
</dbReference>
<dbReference type="ExpressionAtlas" id="Q13433">
    <property type="expression patterns" value="baseline and differential"/>
</dbReference>
<dbReference type="GO" id="GO:0016324">
    <property type="term" value="C:apical plasma membrane"/>
    <property type="evidence" value="ECO:0000250"/>
    <property type="project" value="UniProtKB"/>
</dbReference>
<dbReference type="GO" id="GO:0009986">
    <property type="term" value="C:cell surface"/>
    <property type="evidence" value="ECO:0007005"/>
    <property type="project" value="UniProtKB"/>
</dbReference>
<dbReference type="GO" id="GO:0005783">
    <property type="term" value="C:endoplasmic reticulum"/>
    <property type="evidence" value="ECO:0007669"/>
    <property type="project" value="Ensembl"/>
</dbReference>
<dbReference type="GO" id="GO:0031258">
    <property type="term" value="C:lamellipodium membrane"/>
    <property type="evidence" value="ECO:0000314"/>
    <property type="project" value="UniProtKB"/>
</dbReference>
<dbReference type="GO" id="GO:0045121">
    <property type="term" value="C:membrane raft"/>
    <property type="evidence" value="ECO:0000314"/>
    <property type="project" value="UniProtKB"/>
</dbReference>
<dbReference type="GO" id="GO:0005886">
    <property type="term" value="C:plasma membrane"/>
    <property type="evidence" value="ECO:0000314"/>
    <property type="project" value="UniProtKB"/>
</dbReference>
<dbReference type="GO" id="GO:0140410">
    <property type="term" value="F:monoatomic cation:bicarbonate symporter activity"/>
    <property type="evidence" value="ECO:0000318"/>
    <property type="project" value="GO_Central"/>
</dbReference>
<dbReference type="GO" id="GO:0005385">
    <property type="term" value="F:zinc ion transmembrane transporter activity"/>
    <property type="evidence" value="ECO:0000314"/>
    <property type="project" value="UniProtKB"/>
</dbReference>
<dbReference type="GO" id="GO:0001837">
    <property type="term" value="P:epithelial to mesenchymal transition"/>
    <property type="evidence" value="ECO:0000314"/>
    <property type="project" value="UniProtKB"/>
</dbReference>
<dbReference type="GO" id="GO:0030003">
    <property type="term" value="P:intracellular monoatomic cation homeostasis"/>
    <property type="evidence" value="ECO:0000318"/>
    <property type="project" value="GO_Central"/>
</dbReference>
<dbReference type="GO" id="GO:0006882">
    <property type="term" value="P:intracellular zinc ion homeostasis"/>
    <property type="evidence" value="ECO:0000314"/>
    <property type="project" value="BHF-UCL"/>
</dbReference>
<dbReference type="GO" id="GO:0046649">
    <property type="term" value="P:lymphocyte activation"/>
    <property type="evidence" value="ECO:0000315"/>
    <property type="project" value="UniProtKB"/>
</dbReference>
<dbReference type="GO" id="GO:0050852">
    <property type="term" value="P:T cell receptor signaling pathway"/>
    <property type="evidence" value="ECO:0000314"/>
    <property type="project" value="UniProtKB"/>
</dbReference>
<dbReference type="GO" id="GO:0071578">
    <property type="term" value="P:zinc ion import across plasma membrane"/>
    <property type="evidence" value="ECO:0000314"/>
    <property type="project" value="UniProtKB"/>
</dbReference>
<dbReference type="GO" id="GO:0071577">
    <property type="term" value="P:zinc ion transmembrane transport"/>
    <property type="evidence" value="ECO:0000315"/>
    <property type="project" value="UniProtKB"/>
</dbReference>
<dbReference type="InterPro" id="IPR003689">
    <property type="entry name" value="ZIP"/>
</dbReference>
<dbReference type="InterPro" id="IPR050799">
    <property type="entry name" value="ZIP_Transporter"/>
</dbReference>
<dbReference type="PANTHER" id="PTHR12191">
    <property type="entry name" value="SOLUTE CARRIER FAMILY 39"/>
    <property type="match status" value="1"/>
</dbReference>
<dbReference type="PANTHER" id="PTHR12191:SF22">
    <property type="entry name" value="ZINC TRANSPORTER ZIP6"/>
    <property type="match status" value="1"/>
</dbReference>
<dbReference type="Pfam" id="PF02535">
    <property type="entry name" value="Zip"/>
    <property type="match status" value="2"/>
</dbReference>
<gene>
    <name evidence="22" type="primary">SLC39A6</name>
    <name type="synonym">LIV1</name>
    <name type="synonym">ZIP6</name>
</gene>
<reference key="1">
    <citation type="submission" date="2001-02" db="EMBL/GenBank/DDBJ databases">
        <authorList>
            <person name="Green C."/>
            <person name="Morgan H.E."/>
        </authorList>
    </citation>
    <scope>NUCLEOTIDE SEQUENCE [MRNA] (ISOFORM 1)</scope>
    <scope>VARIANT ASP-119</scope>
</reference>
<reference key="2">
    <citation type="journal article" date="2004" name="Nat. Genet.">
        <title>Complete sequencing and characterization of 21,243 full-length human cDNAs.</title>
        <authorList>
            <person name="Ota T."/>
            <person name="Suzuki Y."/>
            <person name="Nishikawa T."/>
            <person name="Otsuki T."/>
            <person name="Sugiyama T."/>
            <person name="Irie R."/>
            <person name="Wakamatsu A."/>
            <person name="Hayashi K."/>
            <person name="Sato H."/>
            <person name="Nagai K."/>
            <person name="Kimura K."/>
            <person name="Makita H."/>
            <person name="Sekine M."/>
            <person name="Obayashi M."/>
            <person name="Nishi T."/>
            <person name="Shibahara T."/>
            <person name="Tanaka T."/>
            <person name="Ishii S."/>
            <person name="Yamamoto J."/>
            <person name="Saito K."/>
            <person name="Kawai Y."/>
            <person name="Isono Y."/>
            <person name="Nakamura Y."/>
            <person name="Nagahari K."/>
            <person name="Murakami K."/>
            <person name="Yasuda T."/>
            <person name="Iwayanagi T."/>
            <person name="Wagatsuma M."/>
            <person name="Shiratori A."/>
            <person name="Sudo H."/>
            <person name="Hosoiri T."/>
            <person name="Kaku Y."/>
            <person name="Kodaira H."/>
            <person name="Kondo H."/>
            <person name="Sugawara M."/>
            <person name="Takahashi M."/>
            <person name="Kanda K."/>
            <person name="Yokoi T."/>
            <person name="Furuya T."/>
            <person name="Kikkawa E."/>
            <person name="Omura Y."/>
            <person name="Abe K."/>
            <person name="Kamihara K."/>
            <person name="Katsuta N."/>
            <person name="Sato K."/>
            <person name="Tanikawa M."/>
            <person name="Yamazaki M."/>
            <person name="Ninomiya K."/>
            <person name="Ishibashi T."/>
            <person name="Yamashita H."/>
            <person name="Murakawa K."/>
            <person name="Fujimori K."/>
            <person name="Tanai H."/>
            <person name="Kimata M."/>
            <person name="Watanabe M."/>
            <person name="Hiraoka S."/>
            <person name="Chiba Y."/>
            <person name="Ishida S."/>
            <person name="Ono Y."/>
            <person name="Takiguchi S."/>
            <person name="Watanabe S."/>
            <person name="Yosida M."/>
            <person name="Hotuta T."/>
            <person name="Kusano J."/>
            <person name="Kanehori K."/>
            <person name="Takahashi-Fujii A."/>
            <person name="Hara H."/>
            <person name="Tanase T.-O."/>
            <person name="Nomura Y."/>
            <person name="Togiya S."/>
            <person name="Komai F."/>
            <person name="Hara R."/>
            <person name="Takeuchi K."/>
            <person name="Arita M."/>
            <person name="Imose N."/>
            <person name="Musashino K."/>
            <person name="Yuuki H."/>
            <person name="Oshima A."/>
            <person name="Sasaki N."/>
            <person name="Aotsuka S."/>
            <person name="Yoshikawa Y."/>
            <person name="Matsunawa H."/>
            <person name="Ichihara T."/>
            <person name="Shiohata N."/>
            <person name="Sano S."/>
            <person name="Moriya S."/>
            <person name="Momiyama H."/>
            <person name="Satoh N."/>
            <person name="Takami S."/>
            <person name="Terashima Y."/>
            <person name="Suzuki O."/>
            <person name="Nakagawa S."/>
            <person name="Senoh A."/>
            <person name="Mizoguchi H."/>
            <person name="Goto Y."/>
            <person name="Shimizu F."/>
            <person name="Wakebe H."/>
            <person name="Hishigaki H."/>
            <person name="Watanabe T."/>
            <person name="Sugiyama A."/>
            <person name="Takemoto M."/>
            <person name="Kawakami B."/>
            <person name="Yamazaki M."/>
            <person name="Watanabe K."/>
            <person name="Kumagai A."/>
            <person name="Itakura S."/>
            <person name="Fukuzumi Y."/>
            <person name="Fujimori Y."/>
            <person name="Komiyama M."/>
            <person name="Tashiro H."/>
            <person name="Tanigami A."/>
            <person name="Fujiwara T."/>
            <person name="Ono T."/>
            <person name="Yamada K."/>
            <person name="Fujii Y."/>
            <person name="Ozaki K."/>
            <person name="Hirao M."/>
            <person name="Ohmori Y."/>
            <person name="Kawabata A."/>
            <person name="Hikiji T."/>
            <person name="Kobatake N."/>
            <person name="Inagaki H."/>
            <person name="Ikema Y."/>
            <person name="Okamoto S."/>
            <person name="Okitani R."/>
            <person name="Kawakami T."/>
            <person name="Noguchi S."/>
            <person name="Itoh T."/>
            <person name="Shigeta K."/>
            <person name="Senba T."/>
            <person name="Matsumura K."/>
            <person name="Nakajima Y."/>
            <person name="Mizuno T."/>
            <person name="Morinaga M."/>
            <person name="Sasaki M."/>
            <person name="Togashi T."/>
            <person name="Oyama M."/>
            <person name="Hata H."/>
            <person name="Watanabe M."/>
            <person name="Komatsu T."/>
            <person name="Mizushima-Sugano J."/>
            <person name="Satoh T."/>
            <person name="Shirai Y."/>
            <person name="Takahashi Y."/>
            <person name="Nakagawa K."/>
            <person name="Okumura K."/>
            <person name="Nagase T."/>
            <person name="Nomura N."/>
            <person name="Kikuchi H."/>
            <person name="Masuho Y."/>
            <person name="Yamashita R."/>
            <person name="Nakai K."/>
            <person name="Yada T."/>
            <person name="Nakamura Y."/>
            <person name="Ohara O."/>
            <person name="Isogai T."/>
            <person name="Sugano S."/>
        </authorList>
    </citation>
    <scope>NUCLEOTIDE SEQUENCE [LARGE SCALE MRNA] (ISOFORM 1)</scope>
    <scope>VARIANT ASP-119</scope>
    <source>
        <tissue>Teratocarcinoma</tissue>
        <tissue>Trachea</tissue>
    </source>
</reference>
<reference key="3">
    <citation type="journal article" date="2005" name="Nature">
        <title>DNA sequence and analysis of human chromosome 18.</title>
        <authorList>
            <person name="Nusbaum C."/>
            <person name="Zody M.C."/>
            <person name="Borowsky M.L."/>
            <person name="Kamal M."/>
            <person name="Kodira C.D."/>
            <person name="Taylor T.D."/>
            <person name="Whittaker C.A."/>
            <person name="Chang J.L."/>
            <person name="Cuomo C.A."/>
            <person name="Dewar K."/>
            <person name="FitzGerald M.G."/>
            <person name="Yang X."/>
            <person name="Abouelleil A."/>
            <person name="Allen N.R."/>
            <person name="Anderson S."/>
            <person name="Bloom T."/>
            <person name="Bugalter B."/>
            <person name="Butler J."/>
            <person name="Cook A."/>
            <person name="DeCaprio D."/>
            <person name="Engels R."/>
            <person name="Garber M."/>
            <person name="Gnirke A."/>
            <person name="Hafez N."/>
            <person name="Hall J.L."/>
            <person name="Norman C.H."/>
            <person name="Itoh T."/>
            <person name="Jaffe D.B."/>
            <person name="Kuroki Y."/>
            <person name="Lehoczky J."/>
            <person name="Lui A."/>
            <person name="Macdonald P."/>
            <person name="Mauceli E."/>
            <person name="Mikkelsen T.S."/>
            <person name="Naylor J.W."/>
            <person name="Nicol R."/>
            <person name="Nguyen C."/>
            <person name="Noguchi H."/>
            <person name="O'Leary S.B."/>
            <person name="Piqani B."/>
            <person name="Smith C.L."/>
            <person name="Talamas J.A."/>
            <person name="Topham K."/>
            <person name="Totoki Y."/>
            <person name="Toyoda A."/>
            <person name="Wain H.M."/>
            <person name="Young S.K."/>
            <person name="Zeng Q."/>
            <person name="Zimmer A.R."/>
            <person name="Fujiyama A."/>
            <person name="Hattori M."/>
            <person name="Birren B.W."/>
            <person name="Sakaki Y."/>
            <person name="Lander E.S."/>
        </authorList>
    </citation>
    <scope>NUCLEOTIDE SEQUENCE [LARGE SCALE GENOMIC DNA]</scope>
</reference>
<reference key="4">
    <citation type="submission" date="2005-07" db="EMBL/GenBank/DDBJ databases">
        <authorList>
            <person name="Mural R.J."/>
            <person name="Istrail S."/>
            <person name="Sutton G.G."/>
            <person name="Florea L."/>
            <person name="Halpern A.L."/>
            <person name="Mobarry C.M."/>
            <person name="Lippert R."/>
            <person name="Walenz B."/>
            <person name="Shatkay H."/>
            <person name="Dew I."/>
            <person name="Miller J.R."/>
            <person name="Flanigan M.J."/>
            <person name="Edwards N.J."/>
            <person name="Bolanos R."/>
            <person name="Fasulo D."/>
            <person name="Halldorsson B.V."/>
            <person name="Hannenhalli S."/>
            <person name="Turner R."/>
            <person name="Yooseph S."/>
            <person name="Lu F."/>
            <person name="Nusskern D.R."/>
            <person name="Shue B.C."/>
            <person name="Zheng X.H."/>
            <person name="Zhong F."/>
            <person name="Delcher A.L."/>
            <person name="Huson D.H."/>
            <person name="Kravitz S.A."/>
            <person name="Mouchard L."/>
            <person name="Reinert K."/>
            <person name="Remington K.A."/>
            <person name="Clark A.G."/>
            <person name="Waterman M.S."/>
            <person name="Eichler E.E."/>
            <person name="Adams M.D."/>
            <person name="Hunkapiller M.W."/>
            <person name="Myers E.W."/>
            <person name="Venter J.C."/>
        </authorList>
    </citation>
    <scope>NUCLEOTIDE SEQUENCE [LARGE SCALE GENOMIC DNA]</scope>
    <scope>VARIANT ASP-119</scope>
</reference>
<reference key="5">
    <citation type="journal article" date="2004" name="Genome Res.">
        <title>The status, quality, and expansion of the NIH full-length cDNA project: the Mammalian Gene Collection (MGC).</title>
        <authorList>
            <consortium name="The MGC Project Team"/>
        </authorList>
    </citation>
    <scope>NUCLEOTIDE SEQUENCE [LARGE SCALE MRNA] (ISOFORM 2)</scope>
    <scope>NUCLEOTIDE SEQUENCE [LARGE SCALE MRNA] OF 382-755 (ISOFORM 1)</scope>
    <source>
        <tissue>Eye</tissue>
        <tissue>Lymph</tissue>
    </source>
</reference>
<reference key="6">
    <citation type="journal article" date="2004" name="Protein Sci.">
        <title>Signal peptide prediction based on analysis of experimentally verified cleavage sites.</title>
        <authorList>
            <person name="Zhang Z."/>
            <person name="Henzel W.J."/>
        </authorList>
    </citation>
    <scope>PROTEIN SEQUENCE OF 29-43</scope>
</reference>
<reference key="7">
    <citation type="journal article" date="1988" name="Mol. Cell. Endocrinol.">
        <title>Effects of oestrogen on the expression of a 4.4 kb mRNA in the ZR-75-1 human breast cancer cell line.</title>
        <authorList>
            <person name="Manning D.L."/>
            <person name="Daly R.J."/>
            <person name="Lord P.G."/>
            <person name="Kelly K.F."/>
            <person name="Green C.D."/>
        </authorList>
    </citation>
    <scope>INDUCTION</scope>
</reference>
<reference key="8">
    <citation type="journal article" date="2003" name="Biochem. J.">
        <title>Structure-function analysis of LIV-1, the breast cancer-associated protein that belongs to a new subfamily of zinc transporters.</title>
        <authorList>
            <person name="Taylor K.M."/>
            <person name="Morgan H.E."/>
            <person name="Johnson A."/>
            <person name="Hadley L.J."/>
            <person name="Nicholson R.I."/>
        </authorList>
    </citation>
    <scope>FUNCTION</scope>
    <scope>TRANSPORTER ACTIVITY</scope>
    <scope>SUBCELLULAR LOCATION</scope>
    <scope>TOPOLOGY</scope>
    <scope>TISSUE SPECIFICITY</scope>
    <scope>GLYCOSYLATION</scope>
</reference>
<reference key="9">
    <citation type="journal article" date="2008" name="Brain Res.">
        <title>Zip6 (LIV-1) regulates zinc uptake in neuroblastoma cells under resting but not depolarizing conditions.</title>
        <authorList>
            <person name="Chowanadisai W."/>
            <person name="Loennerdal B."/>
            <person name="Kelleher S.L."/>
        </authorList>
    </citation>
    <scope>FUNCTION</scope>
    <scope>TRANSPORTER ACTIVITY</scope>
    <scope>SUBCELLULAR LOCATION</scope>
    <scope>INDUCTION</scope>
</reference>
<reference key="10">
    <citation type="journal article" date="2008" name="Proc. Natl. Acad. Sci. U.S.A.">
        <title>A quantitative atlas of mitotic phosphorylation.</title>
        <authorList>
            <person name="Dephoure N."/>
            <person name="Zhou C."/>
            <person name="Villen J."/>
            <person name="Beausoleil S.A."/>
            <person name="Bakalarski C.E."/>
            <person name="Elledge S.J."/>
            <person name="Gygi S.P."/>
        </authorList>
    </citation>
    <scope>IDENTIFICATION BY MASS SPECTROMETRY [LARGE SCALE ANALYSIS]</scope>
    <source>
        <tissue>Cervix carcinoma</tissue>
    </source>
</reference>
<reference key="11">
    <citation type="journal article" date="2009" name="Anal. Chem.">
        <title>Lys-N and trypsin cover complementary parts of the phosphoproteome in a refined SCX-based approach.</title>
        <authorList>
            <person name="Gauci S."/>
            <person name="Helbig A.O."/>
            <person name="Slijper M."/>
            <person name="Krijgsveld J."/>
            <person name="Heck A.J."/>
            <person name="Mohammed S."/>
        </authorList>
    </citation>
    <scope>IDENTIFICATION BY MASS SPECTROMETRY [LARGE SCALE ANALYSIS]</scope>
</reference>
<reference key="12">
    <citation type="journal article" date="2009" name="Nat. Biotechnol.">
        <title>Mass-spectrometric identification and relative quantification of N-linked cell surface glycoproteins.</title>
        <authorList>
            <person name="Wollscheid B."/>
            <person name="Bausch-Fluck D."/>
            <person name="Henderson C."/>
            <person name="O'Brien R."/>
            <person name="Bibel M."/>
            <person name="Schiess R."/>
            <person name="Aebersold R."/>
            <person name="Watts J.D."/>
        </authorList>
    </citation>
    <scope>GLYCOSYLATION [LARGE SCALE ANALYSIS] AT ASN-67 AND ASN-241</scope>
    <source>
        <tissue>Leukemic T-cell</tissue>
    </source>
</reference>
<reference key="13">
    <citation type="journal article" date="2011" name="J. Exp. Med.">
        <title>Regulation of T cell receptor signaling by activation-induced zinc influx.</title>
        <authorList>
            <person name="Yu M."/>
            <person name="Lee W.W."/>
            <person name="Tomar D."/>
            <person name="Pryshchep S."/>
            <person name="Czesnikiewicz-Guzik M."/>
            <person name="Lamar D.L."/>
            <person name="Li G."/>
            <person name="Singh K."/>
            <person name="Tian L."/>
            <person name="Weyand C.M."/>
            <person name="Goronzy J.J."/>
        </authorList>
    </citation>
    <scope>FUNCTION</scope>
    <scope>TRANSPORTER ACTIVITY</scope>
</reference>
<reference key="14">
    <citation type="journal article" date="2013" name="Biochem. J.">
        <title>A mechanism for epithelial-mesenchymal transition and anoikis resistance in breast cancer triggered by zinc channel ZIP6 and STAT3 (signal transducer and activator of transcription 3).</title>
        <authorList>
            <person name="Hogstrand C."/>
            <person name="Kille P."/>
            <person name="Ackland M.L."/>
            <person name="Hiscox S."/>
            <person name="Taylor K.M."/>
        </authorList>
    </citation>
    <scope>FUNCTION</scope>
    <scope>PROTEOLYTIC CLEAVAGE</scope>
    <scope>GLYCOSYLATION</scope>
    <scope>INDUCTION</scope>
</reference>
<reference key="15">
    <citation type="journal article" date="2013" name="J. Proteome Res.">
        <title>Toward a comprehensive characterization of a human cancer cell phosphoproteome.</title>
        <authorList>
            <person name="Zhou H."/>
            <person name="Di Palma S."/>
            <person name="Preisinger C."/>
            <person name="Peng M."/>
            <person name="Polat A.N."/>
            <person name="Heck A.J."/>
            <person name="Mohammed S."/>
        </authorList>
    </citation>
    <scope>PHOSPHORYLATION [LARGE SCALE ANALYSIS] AT SER-471 AND SER-478</scope>
    <scope>IDENTIFICATION BY MASS SPECTROMETRY [LARGE SCALE ANALYSIS]</scope>
    <source>
        <tissue>Cervix carcinoma</tissue>
        <tissue>Erythroleukemia</tissue>
    </source>
</reference>
<reference key="16">
    <citation type="journal article" date="2014" name="Mol. Hum. Reprod.">
        <title>Maternally-derived zinc transporters ZIP6 and ZIP10 drive the mammalian oocyte-to-egg transition.</title>
        <authorList>
            <person name="Kong B.Y."/>
            <person name="Duncan F.E."/>
            <person name="Que E.L."/>
            <person name="Kim A.M."/>
            <person name="O'Halloran T.V."/>
            <person name="Woodruff T.K."/>
        </authorList>
    </citation>
    <scope>FUNCTION</scope>
</reference>
<reference key="17">
    <citation type="journal article" date="2016" name="Biochem. J.">
        <title>Zinc transporter ZIP10 forms a heteromer with ZIP6 which regulates embryonic development and cell migration.</title>
        <authorList>
            <person name="Taylor K.M."/>
            <person name="Muraina I.A."/>
            <person name="Brethour D."/>
            <person name="Schmitt-Ulms G."/>
            <person name="Nimmanon T."/>
            <person name="Ziliotto S."/>
            <person name="Kille P."/>
            <person name="Hogstrand C."/>
        </authorList>
    </citation>
    <scope>INTERACTION WITH SLC39A10</scope>
    <scope>FUNCTION</scope>
    <scope>TRANSPORTER ACTIVITY</scope>
</reference>
<reference key="18">
    <citation type="journal article" date="2019" name="J. Immunol.">
        <title>Zip6 Transporter Is an Essential Component of the Lymphocyte Activation Machinery.</title>
        <authorList>
            <person name="Colomar-Carando N."/>
            <person name="Meseguer A."/>
            <person name="Company-Garrido I."/>
            <person name="Jutz S."/>
            <person name="Herrera-Fernandez V."/>
            <person name="Olvera A."/>
            <person name="Kiefer K."/>
            <person name="Brander C."/>
            <person name="Steinberger P."/>
            <person name="Vicente R."/>
        </authorList>
    </citation>
    <scope>INDUCTION</scope>
    <scope>FUNCTION</scope>
    <scope>TRANSPORTER ACTIVITY</scope>
</reference>
<reference key="19">
    <citation type="journal article" date="2021" name="Cell. Mol. Life Sci.">
        <title>The ZIP6/ZIP10 heteromer is essential for the zinc-mediated trigger of mitosis.</title>
        <authorList>
            <person name="Nimmanon T."/>
            <person name="Ziliotto S."/>
            <person name="Ogle O."/>
            <person name="Burt A."/>
            <person name="Gee J.M.W."/>
            <person name="Andrews G.K."/>
            <person name="Kille P."/>
            <person name="Hogstrand C."/>
            <person name="Maret W."/>
            <person name="Taylor K.M."/>
        </authorList>
    </citation>
    <scope>FUNCTION</scope>
    <scope>IDENTIFICATION IN A COMPLEX WITH SLC39A10 AND STAT3</scope>
</reference>
<reference key="20">
    <citation type="journal article" date="2021" name="Front. Immunol.">
        <title>Zap70 Regulates TCR-Mediated Zip6 Activation at the Immunological Synapse.</title>
        <authorList>
            <person name="Kim B."/>
            <person name="Kim H.Y."/>
            <person name="Lee W.W."/>
        </authorList>
    </citation>
    <scope>FUNCTION</scope>
    <scope>TRANSPORTER ACTIVITY</scope>
    <scope>SUBCELLULAR LOCATION</scope>
    <scope>PHOSPHORYLATION</scope>
</reference>
<feature type="signal peptide" evidence="7">
    <location>
        <begin position="1"/>
        <end position="28"/>
    </location>
</feature>
<feature type="chain" id="PRO_0000041650" description="Zinc transporter ZIP6">
    <location>
        <begin position="29"/>
        <end position="755"/>
    </location>
</feature>
<feature type="topological domain" description="Extracellular" evidence="5">
    <location>
        <begin position="29"/>
        <end position="325"/>
    </location>
</feature>
<feature type="transmembrane region" description="Helical; Name=1" evidence="3">
    <location>
        <begin position="326"/>
        <end position="346"/>
    </location>
</feature>
<feature type="topological domain" description="Cytoplasmic" evidence="3">
    <location>
        <begin position="347"/>
        <end position="355"/>
    </location>
</feature>
<feature type="transmembrane region" description="Helical; Name=2" evidence="3">
    <location>
        <begin position="356"/>
        <end position="376"/>
    </location>
</feature>
<feature type="topological domain" description="Extracellular" evidence="3">
    <location>
        <begin position="377"/>
        <end position="423"/>
    </location>
</feature>
<feature type="transmembrane region" description="Helical; Name=3" evidence="3">
    <location>
        <begin position="424"/>
        <end position="444"/>
    </location>
</feature>
<feature type="topological domain" description="Cytoplasmic" evidence="3">
    <location>
        <begin position="445"/>
        <end position="657"/>
    </location>
</feature>
<feature type="transmembrane region" description="Helical; Name=4" evidence="3">
    <location>
        <begin position="658"/>
        <end position="678"/>
    </location>
</feature>
<feature type="topological domain" description="Extracellular" evidence="3">
    <location>
        <begin position="679"/>
        <end position="686"/>
    </location>
</feature>
<feature type="transmembrane region" description="Helical; Name=5" evidence="3">
    <location>
        <begin position="687"/>
        <end position="707"/>
    </location>
</feature>
<feature type="topological domain" description="Cytoplasmic" evidence="3">
    <location>
        <begin position="708"/>
        <end position="724"/>
    </location>
</feature>
<feature type="transmembrane region" description="Helical; Name=6" evidence="3">
    <location>
        <begin position="725"/>
        <end position="745"/>
    </location>
</feature>
<feature type="topological domain" description="Extracellular" evidence="5">
    <location>
        <begin position="746"/>
        <end position="755"/>
    </location>
</feature>
<feature type="region of interest" description="Disordered" evidence="4">
    <location>
        <begin position="95"/>
        <end position="186"/>
    </location>
</feature>
<feature type="region of interest" description="Disordered" evidence="4">
    <location>
        <begin position="202"/>
        <end position="246"/>
    </location>
</feature>
<feature type="coiled-coil region" evidence="3">
    <location>
        <begin position="464"/>
        <end position="480"/>
    </location>
</feature>
<feature type="compositionally biased region" description="Basic and acidic residues" evidence="4">
    <location>
        <begin position="95"/>
        <end position="128"/>
    </location>
</feature>
<feature type="compositionally biased region" description="Basic residues" evidence="4">
    <location>
        <begin position="129"/>
        <end position="144"/>
    </location>
</feature>
<feature type="compositionally biased region" description="Basic and acidic residues" evidence="4">
    <location>
        <begin position="145"/>
        <end position="159"/>
    </location>
</feature>
<feature type="compositionally biased region" description="Basic and acidic residues" evidence="4">
    <location>
        <begin position="167"/>
        <end position="179"/>
    </location>
</feature>
<feature type="compositionally biased region" description="Low complexity" evidence="4">
    <location>
        <begin position="219"/>
        <end position="234"/>
    </location>
</feature>
<feature type="modified residue" description="Phosphoserine" evidence="23">
    <location>
        <position position="471"/>
    </location>
</feature>
<feature type="modified residue" description="Phosphoserine" evidence="23">
    <location>
        <position position="478"/>
    </location>
</feature>
<feature type="glycosylation site" description="N-linked (GlcNAc...) asparagine" evidence="9">
    <location>
        <position position="67"/>
    </location>
</feature>
<feature type="glycosylation site" description="N-linked (GlcNAc...) asparagine" evidence="9">
    <location>
        <position position="241"/>
    </location>
</feature>
<feature type="glycosylation site" description="N-linked (GlcNAc...) asparagine" evidence="3">
    <location>
        <position position="266"/>
    </location>
</feature>
<feature type="glycosylation site" description="N-linked (GlcNAc...) asparagine" evidence="3">
    <location>
        <position position="283"/>
    </location>
</feature>
<feature type="glycosylation site" description="N-linked (GlcNAc...) asparagine" evidence="3">
    <location>
        <position position="684"/>
    </location>
</feature>
<feature type="splice variant" id="VSP_014309" description="In isoform 2." evidence="20">
    <location>
        <begin position="1"/>
        <end position="275"/>
    </location>
</feature>
<feature type="splice variant" id="VSP_014310" description="In isoform 2." evidence="20">
    <original>PE</original>
    <variation>SF</variation>
    <location>
        <begin position="707"/>
        <end position="708"/>
    </location>
</feature>
<feature type="splice variant" id="VSP_014311" description="In isoform 2." evidence="20">
    <location>
        <begin position="709"/>
        <end position="755"/>
    </location>
</feature>
<feature type="sequence variant" id="VAR_059964" description="In dbSNP:rs1789528." evidence="6 18 19">
    <original>E</original>
    <variation>D</variation>
    <location>
        <position position="119"/>
    </location>
</feature>
<feature type="sequence conflict" description="In Ref. 1; AAA96258." evidence="21" ref="1">
    <location>
        <begin position="127"/>
        <end position="132"/>
    </location>
</feature>
<comment type="function">
    <text evidence="2 5 8 10 11 12 13 15 16 17">Zinc-influx transporter which plays a role in zinc homeostasis and in the induction of epithelial-to-mesenchymal transition (EMT) (PubMed:12839489, PubMed:18272141, PubMed:21422171, PubMed:23919497, PubMed:27274087, PubMed:34394081). When associated with SLC39A10, the heterodimer formed by SLC39A10 and SLC39A6 mediates cellular zinc uptake to trigger cells to undergo epithelial- to-mesenchymal transition (EMT) (PubMed:27274087). The SLC39A10-SLC39A6 heterodimer also controls NCAM1 phosphorylation and its integration into focal adhesion complexes during EMT (By similarity). Zinc influx inactivates GSK3B, enabling unphosphorylated SNAI1 in the nucleus to down-regulate adherence genes such as CDH1, causing loss of cell adherence (PubMed:23919497). In addition, the SLC39A10-SLC39A6 heterodimer plays an essentiel role in initiating mitosis by importing zinc into cells to initiate a pathway resulting in the onset of mitosis (PubMed:32797246). Participates in the T-cell receptor signaling regulation by mediating cellular zinc uptake into activated lymphocytes (PubMed:21422171, PubMed:30552163, PubMed:34394081). Regulates the zinc influx necessary for proper meiotic progression to metaphase II (MII) that allows the oocyte-to-egg transition (PubMed:25143461).</text>
</comment>
<comment type="catalytic activity">
    <reaction evidence="5 8 10 13 15 17">
        <text>Zn(2+)(in) = Zn(2+)(out)</text>
        <dbReference type="Rhea" id="RHEA:29351"/>
        <dbReference type="ChEBI" id="CHEBI:29105"/>
    </reaction>
</comment>
<comment type="subunit">
    <text evidence="2 13 16">Interacts with SLC39A10; which triggers cells to undergo EMT and mitosis (PubMed:27274087). Found in a complex with SLC39A6, SLC39A10 and with the 'Ser-727' phosphorylated form of STAT3 throughout mitosis (PubMed:32797246). Found in a complex with SLC39A6, SLC39A10 and with NCAM1; this complex controls NCAM1 phosphorylation and integration into focal adhesion complexes during epithelial-to-mesenchymal transition (EMT) (By similarity). Found in a complex with SLC39A6, SLC39A10 and with GSK3B that controls NCAM1 phosphorylation (By similarity).</text>
</comment>
<comment type="interaction">
    <interactant intactId="EBI-12956703">
        <id>Q13433-2</id>
    </interactant>
    <interactant intactId="EBI-707714">
        <id>Q92843</id>
        <label>BCL2L2</label>
    </interactant>
    <organismsDiffer>false</organismsDiffer>
    <experiments>3</experiments>
</comment>
<comment type="interaction">
    <interactant intactId="EBI-12956703">
        <id>Q13433-2</id>
    </interactant>
    <interactant intactId="EBI-10192441">
        <id>Q86VR2</id>
        <label>RETREG3</label>
    </interactant>
    <organismsDiffer>false</organismsDiffer>
    <experiments>3</experiments>
</comment>
<comment type="interaction">
    <interactant intactId="EBI-12956703">
        <id>Q13433-2</id>
    </interactant>
    <interactant intactId="EBI-18159983">
        <id>Q3KNW5</id>
        <label>SLC10A6</label>
    </interactant>
    <organismsDiffer>false</organismsDiffer>
    <experiments>3</experiments>
</comment>
<comment type="subcellular location">
    <subcellularLocation>
        <location evidence="8">Cell membrane</location>
        <topology evidence="3">Multi-pass membrane protein</topology>
    </subcellularLocation>
    <subcellularLocation>
        <location evidence="5">Cell projection</location>
        <location evidence="5">Lamellipodium membrane</location>
        <topology evidence="5">Multi-pass membrane protein</topology>
    </subcellularLocation>
    <subcellularLocation>
        <location evidence="17">Membrane raft</location>
        <topology evidence="3">Multi-pass membrane protein</topology>
    </subcellularLocation>
    <subcellularLocation>
        <location evidence="1">Apical cell membrane</location>
    </subcellularLocation>
    <text evidence="1 17">Localizes to lipid rafts in T cells and is recruited into the immunological synapse in response to TCR stimulation (PubMed:34394081). In the choroid plexus is limited to the apical membrane in epithelial cells (By similarity).</text>
</comment>
<comment type="alternative products">
    <event type="alternative splicing"/>
    <isoform>
        <id>Q13433-1</id>
        <name>1</name>
        <sequence type="displayed"/>
    </isoform>
    <isoform>
        <id>Q13433-2</id>
        <name>2</name>
        <sequence type="described" ref="VSP_014309 VSP_014310 VSP_014311"/>
    </isoform>
</comment>
<comment type="tissue specificity">
    <text evidence="5">Highly expressed in the breast, prostate, placenta, kidney, pituitary and corpus callosum (PubMed:12839489). Weakly expressed in heart and intestine. Also highly expressed in cells derived from an adenocarcinoma of the cervix and lung carcinoma (PubMed:12839489).</text>
</comment>
<comment type="induction">
    <text evidence="8 11 14 15">Up-regulated by estrogen in breast cancer cells lines (PubMed:23919497, PubMed:2903103). Decreased protein level in response to zinc treatment (PubMed:18272141). Increased upon T cell activation (PubMed:30552163). Induced by STAT3 (PubMed:23919497).</text>
</comment>
<comment type="PTM">
    <text evidence="11">Cleaved on the N-terminus before locating to the plasma membrane.</text>
</comment>
<comment type="PTM">
    <text evidence="5 9 11">N-glycosylated.</text>
</comment>
<comment type="PTM">
    <text evidence="17">Phosphorylated by ZAP70 in response to TCR stimulation leading to its activation.</text>
</comment>
<comment type="similarity">
    <text evidence="21">Belongs to the ZIP transporter (TC 2.A.5) family.</text>
</comment>
<comment type="sequence caution" evidence="21">
    <conflict type="erroneous initiation">
        <sequence resource="EMBL-CDS" id="BAG61161"/>
    </conflict>
    <text>Truncated N-terminus.</text>
</comment>
<comment type="online information" name="Atlas of Genetics and Cytogenetics in Oncology and Haematology">
    <link uri="https://atlasgeneticsoncology.org/gene/44189/SLC39A6"/>
</comment>
<evidence type="ECO:0000250" key="1">
    <source>
        <dbReference type="UniProtKB" id="Q4V887"/>
    </source>
</evidence>
<evidence type="ECO:0000250" key="2">
    <source>
        <dbReference type="UniProtKB" id="Q8C145"/>
    </source>
</evidence>
<evidence type="ECO:0000255" key="3"/>
<evidence type="ECO:0000256" key="4">
    <source>
        <dbReference type="SAM" id="MobiDB-lite"/>
    </source>
</evidence>
<evidence type="ECO:0000269" key="5">
    <source>
    </source>
</evidence>
<evidence type="ECO:0000269" key="6">
    <source>
    </source>
</evidence>
<evidence type="ECO:0000269" key="7">
    <source>
    </source>
</evidence>
<evidence type="ECO:0000269" key="8">
    <source>
    </source>
</evidence>
<evidence type="ECO:0000269" key="9">
    <source>
    </source>
</evidence>
<evidence type="ECO:0000269" key="10">
    <source>
    </source>
</evidence>
<evidence type="ECO:0000269" key="11">
    <source>
    </source>
</evidence>
<evidence type="ECO:0000269" key="12">
    <source>
    </source>
</evidence>
<evidence type="ECO:0000269" key="13">
    <source>
    </source>
</evidence>
<evidence type="ECO:0000269" key="14">
    <source>
    </source>
</evidence>
<evidence type="ECO:0000269" key="15">
    <source>
    </source>
</evidence>
<evidence type="ECO:0000269" key="16">
    <source>
    </source>
</evidence>
<evidence type="ECO:0000269" key="17">
    <source>
    </source>
</evidence>
<evidence type="ECO:0000269" key="18">
    <source ref="1"/>
</evidence>
<evidence type="ECO:0000269" key="19">
    <source ref="4"/>
</evidence>
<evidence type="ECO:0000303" key="20">
    <source>
    </source>
</evidence>
<evidence type="ECO:0000305" key="21"/>
<evidence type="ECO:0000312" key="22">
    <source>
        <dbReference type="HGNC" id="HGNC:18607"/>
    </source>
</evidence>
<evidence type="ECO:0007744" key="23">
    <source>
    </source>
</evidence>